<keyword id="KW-1003">Cell membrane</keyword>
<keyword id="KW-0968">Cytoplasmic vesicle</keyword>
<keyword id="KW-1015">Disulfide bond</keyword>
<keyword id="KW-0967">Endosome</keyword>
<keyword id="KW-0290">Folate-binding</keyword>
<keyword id="KW-0325">Glycoprotein</keyword>
<keyword id="KW-0336">GPI-anchor</keyword>
<keyword id="KW-0449">Lipoprotein</keyword>
<keyword id="KW-0472">Membrane</keyword>
<keyword id="KW-0675">Receptor</keyword>
<keyword id="KW-1185">Reference proteome</keyword>
<keyword id="KW-0964">Secreted</keyword>
<keyword id="KW-0732">Signal</keyword>
<keyword id="KW-0813">Transport</keyword>
<name>FOLR1_MOUSE</name>
<proteinExistence type="evidence at protein level"/>
<organism>
    <name type="scientific">Mus musculus</name>
    <name type="common">Mouse</name>
    <dbReference type="NCBI Taxonomy" id="10090"/>
    <lineage>
        <taxon>Eukaryota</taxon>
        <taxon>Metazoa</taxon>
        <taxon>Chordata</taxon>
        <taxon>Craniata</taxon>
        <taxon>Vertebrata</taxon>
        <taxon>Euteleostomi</taxon>
        <taxon>Mammalia</taxon>
        <taxon>Eutheria</taxon>
        <taxon>Euarchontoglires</taxon>
        <taxon>Glires</taxon>
        <taxon>Rodentia</taxon>
        <taxon>Myomorpha</taxon>
        <taxon>Muroidea</taxon>
        <taxon>Muridae</taxon>
        <taxon>Murinae</taxon>
        <taxon>Mus</taxon>
        <taxon>Mus</taxon>
    </lineage>
</organism>
<comment type="function">
    <text evidence="1 3 4 5 6 7 8">Binds to folate and reduced folic acid derivatives and mediates delivery of 5-methyltetrahydrofolate and folate analogs into the interior of cells (PubMed:1894617). Has high affinity for folate and folic acid analogs at neutral pH (By similarity). Exposure to slightly acidic pH after receptor endocytosis triggers a conformation change that strongly reduces its affinity for folates and mediates their release (By similarity). Required for normal embryonic development and normal cell proliferation (PubMed:10508523, PubMed:12854656, PubMed:15259034, PubMed:17286298). Required for renal folate reabsorption (PubMed:15703271).</text>
</comment>
<comment type="subcellular location">
    <subcellularLocation>
        <location evidence="1">Cell membrane</location>
        <topology evidence="1">Lipid-anchor</topology>
        <topology evidence="1">GPI-anchor</topology>
    </subcellularLocation>
    <subcellularLocation>
        <location evidence="1">Apical cell membrane</location>
        <topology evidence="1">Lipid-anchor</topology>
        <topology evidence="1">GPI-anchor</topology>
    </subcellularLocation>
    <subcellularLocation>
        <location evidence="1">Basolateral cell membrane</location>
        <topology evidence="1">Lipid-anchor</topology>
        <topology evidence="1">GPI-like-anchor</topology>
    </subcellularLocation>
    <subcellularLocation>
        <location evidence="1">Secreted</location>
    </subcellularLocation>
    <subcellularLocation>
        <location evidence="1">Cytoplasmic vesicle</location>
    </subcellularLocation>
    <subcellularLocation>
        <location evidence="1">Cytoplasmic vesicle</location>
        <location evidence="1">Clathrin-coated vesicle</location>
    </subcellularLocation>
    <subcellularLocation>
        <location evidence="1">Endosome</location>
    </subcellularLocation>
    <text evidence="1">Endocytosed into cytoplasmic vesicles and then recycled to the cell membrane.</text>
</comment>
<comment type="tissue specificity">
    <text evidence="6">Detected in kidney proximal tubules (at protein level).</text>
</comment>
<comment type="PTM">
    <text evidence="1">The secreted form is derived from the membrane-bound form either by cleavage of the GPI anchor, or/and by proteolysis catalyzed by a metalloprotease.</text>
</comment>
<comment type="disruption phenotype">
    <text evidence="3 4 5 6 7">Embryonic lethality at about 10.5 dpc, due to gross developmental defects, including defects of neural tube closure, craniofacial defects and defects in heart development. Embryos can be rescued by maternal folate supplementation.</text>
</comment>
<comment type="similarity">
    <text evidence="9">Belongs to the folate receptor family.</text>
</comment>
<evidence type="ECO:0000250" key="1">
    <source>
        <dbReference type="UniProtKB" id="P15328"/>
    </source>
</evidence>
<evidence type="ECO:0000255" key="2"/>
<evidence type="ECO:0000269" key="3">
    <source>
    </source>
</evidence>
<evidence type="ECO:0000269" key="4">
    <source>
    </source>
</evidence>
<evidence type="ECO:0000269" key="5">
    <source>
    </source>
</evidence>
<evidence type="ECO:0000269" key="6">
    <source>
    </source>
</evidence>
<evidence type="ECO:0000269" key="7">
    <source>
    </source>
</evidence>
<evidence type="ECO:0000269" key="8">
    <source>
    </source>
</evidence>
<evidence type="ECO:0000305" key="9"/>
<sequence length="255" mass="29449">MAHLMTVQLLLLVMWMAECAQSRATRARTELLNVCMDAKHHKEKPGPEDNLHDQCSPWKTNSCCSTNTSQEAHKDISYLYRFNWNHCGTMTSECKRHFIQDTCLYECSPNLGPWIQQVDQSWRKERILDVPLCKEDCQQWWEDCQSSFTCKSNWHKGWNWSSGHNECPVGASCHPFTFYFPTSAALCEEIWSHSYKLSNYSRGSGRCIQMWFDPAQGNPNEEVARFYAEAMSGAGFHGTWPLLCSLSLVLLWVIS</sequence>
<gene>
    <name type="primary">Folr1</name>
    <name type="synonym">Fbp1</name>
    <name type="synonym">Folbp1</name>
</gene>
<protein>
    <recommendedName>
        <fullName>Folate receptor alpha</fullName>
        <shortName>FR-alpha</shortName>
    </recommendedName>
    <alternativeName>
        <fullName>Folate receptor 1</fullName>
    </alternativeName>
    <alternativeName>
        <fullName>Folate-binding protein 1</fullName>
    </alternativeName>
</protein>
<dbReference type="EMBL" id="M64782">
    <property type="protein sequence ID" value="AAA37595.1"/>
    <property type="molecule type" value="mRNA"/>
</dbReference>
<dbReference type="EMBL" id="AF096319">
    <property type="protein sequence ID" value="AAD19353.1"/>
    <property type="molecule type" value="mRNA"/>
</dbReference>
<dbReference type="EMBL" id="AC167240">
    <property type="status" value="NOT_ANNOTATED_CDS"/>
    <property type="molecule type" value="Genomic_DNA"/>
</dbReference>
<dbReference type="EMBL" id="CH466531">
    <property type="protein sequence ID" value="EDL16530.1"/>
    <property type="molecule type" value="Genomic_DNA"/>
</dbReference>
<dbReference type="EMBL" id="CH466531">
    <property type="protein sequence ID" value="EDL16532.1"/>
    <property type="molecule type" value="Genomic_DNA"/>
</dbReference>
<dbReference type="EMBL" id="CH466531">
    <property type="protein sequence ID" value="EDL16533.1"/>
    <property type="molecule type" value="Genomic_DNA"/>
</dbReference>
<dbReference type="EMBL" id="CH466531">
    <property type="protein sequence ID" value="EDL16534.1"/>
    <property type="molecule type" value="Genomic_DNA"/>
</dbReference>
<dbReference type="EMBL" id="CH466531">
    <property type="protein sequence ID" value="EDL16535.1"/>
    <property type="molecule type" value="Genomic_DNA"/>
</dbReference>
<dbReference type="EMBL" id="CH466531">
    <property type="protein sequence ID" value="EDL16536.1"/>
    <property type="molecule type" value="Genomic_DNA"/>
</dbReference>
<dbReference type="EMBL" id="CH466531">
    <property type="protein sequence ID" value="EDL16537.1"/>
    <property type="molecule type" value="Genomic_DNA"/>
</dbReference>
<dbReference type="EMBL" id="CH466531">
    <property type="protein sequence ID" value="EDL16538.1"/>
    <property type="molecule type" value="Genomic_DNA"/>
</dbReference>
<dbReference type="EMBL" id="BC138781">
    <property type="protein sequence ID" value="AAI38782.1"/>
    <property type="molecule type" value="mRNA"/>
</dbReference>
<dbReference type="EMBL" id="BC138795">
    <property type="protein sequence ID" value="AAI38796.1"/>
    <property type="molecule type" value="mRNA"/>
</dbReference>
<dbReference type="EMBL" id="BC145414">
    <property type="protein sequence ID" value="AAI45415.1"/>
    <property type="molecule type" value="mRNA"/>
</dbReference>
<dbReference type="EMBL" id="M97700">
    <property type="protein sequence ID" value="AAA37596.1"/>
    <property type="molecule type" value="Genomic_DNA"/>
</dbReference>
<dbReference type="EMBL" id="M97701">
    <property type="protein sequence ID" value="AAA37598.1"/>
    <property type="molecule type" value="Genomic_DNA"/>
</dbReference>
<dbReference type="CCDS" id="CCDS21517.1"/>
<dbReference type="PIR" id="A40969">
    <property type="entry name" value="A40969"/>
</dbReference>
<dbReference type="RefSeq" id="NP_001239481.1">
    <property type="nucleotide sequence ID" value="NM_001252552.2"/>
</dbReference>
<dbReference type="RefSeq" id="NP_001239482.1">
    <property type="nucleotide sequence ID" value="NM_001252553.2"/>
</dbReference>
<dbReference type="RefSeq" id="NP_001239483.1">
    <property type="nucleotide sequence ID" value="NM_001252554.2"/>
</dbReference>
<dbReference type="RefSeq" id="NP_001399357.1">
    <property type="nucleotide sequence ID" value="NM_001412428.1"/>
</dbReference>
<dbReference type="RefSeq" id="NP_001399358.1">
    <property type="nucleotide sequence ID" value="NM_001412429.1"/>
</dbReference>
<dbReference type="RefSeq" id="NP_001399359.1">
    <property type="nucleotide sequence ID" value="NM_001412430.1"/>
</dbReference>
<dbReference type="RefSeq" id="NP_001399360.1">
    <property type="nucleotide sequence ID" value="NM_001412431.1"/>
</dbReference>
<dbReference type="RefSeq" id="NP_001399361.1">
    <property type="nucleotide sequence ID" value="NM_001412432.1"/>
</dbReference>
<dbReference type="RefSeq" id="NP_001399362.1">
    <property type="nucleotide sequence ID" value="NM_001412433.1"/>
</dbReference>
<dbReference type="RefSeq" id="NP_001399363.1">
    <property type="nucleotide sequence ID" value="NM_001412434.1"/>
</dbReference>
<dbReference type="RefSeq" id="NP_001399364.1">
    <property type="nucleotide sequence ID" value="NM_001412435.1"/>
</dbReference>
<dbReference type="RefSeq" id="NP_001399365.1">
    <property type="nucleotide sequence ID" value="NM_001412436.1"/>
</dbReference>
<dbReference type="RefSeq" id="NP_001399366.1">
    <property type="nucleotide sequence ID" value="NM_001412437.1"/>
</dbReference>
<dbReference type="RefSeq" id="NP_001399367.1">
    <property type="nucleotide sequence ID" value="NM_001412438.1"/>
</dbReference>
<dbReference type="RefSeq" id="NP_001399368.1">
    <property type="nucleotide sequence ID" value="NM_001412439.1"/>
</dbReference>
<dbReference type="RefSeq" id="NP_032060.2">
    <property type="nucleotide sequence ID" value="NM_008034.3"/>
</dbReference>
<dbReference type="RefSeq" id="XP_006507423.1">
    <property type="nucleotide sequence ID" value="XM_006507360.3"/>
</dbReference>
<dbReference type="RefSeq" id="XP_006507424.1">
    <property type="nucleotide sequence ID" value="XM_006507361.2"/>
</dbReference>
<dbReference type="RefSeq" id="XP_006507426.1">
    <property type="nucleotide sequence ID" value="XM_006507363.3"/>
</dbReference>
<dbReference type="RefSeq" id="XP_006507427.1">
    <property type="nucleotide sequence ID" value="XM_006507364.4"/>
</dbReference>
<dbReference type="RefSeq" id="XP_006507428.1">
    <property type="nucleotide sequence ID" value="XM_006507365.3"/>
</dbReference>
<dbReference type="RefSeq" id="XP_006507429.1">
    <property type="nucleotide sequence ID" value="XM_006507366.4"/>
</dbReference>
<dbReference type="RefSeq" id="XP_006507430.1">
    <property type="nucleotide sequence ID" value="XM_006507367.5"/>
</dbReference>
<dbReference type="RefSeq" id="XP_006507431.1">
    <property type="nucleotide sequence ID" value="XM_006507368.3"/>
</dbReference>
<dbReference type="RefSeq" id="XP_006507432.1">
    <property type="nucleotide sequence ID" value="XM_006507369.3"/>
</dbReference>
<dbReference type="RefSeq" id="XP_006507433.1">
    <property type="nucleotide sequence ID" value="XM_006507370.3"/>
</dbReference>
<dbReference type="SMR" id="P35846"/>
<dbReference type="CORUM" id="P35846"/>
<dbReference type="FunCoup" id="P35846">
    <property type="interactions" value="265"/>
</dbReference>
<dbReference type="STRING" id="10090.ENSMUSP00000102598"/>
<dbReference type="MoonProt" id="P35846"/>
<dbReference type="GlyCosmos" id="P35846">
    <property type="glycosylation" value="4 sites, 10 glycans"/>
</dbReference>
<dbReference type="GlyGen" id="P35846">
    <property type="glycosylation" value="3 sites, 2 N-linked glycans (2 sites)"/>
</dbReference>
<dbReference type="PhosphoSitePlus" id="P35846"/>
<dbReference type="SwissPalm" id="P35846"/>
<dbReference type="jPOST" id="P35846"/>
<dbReference type="PaxDb" id="10090-ENSMUSP00000102598"/>
<dbReference type="PeptideAtlas" id="P35846"/>
<dbReference type="ProteomicsDB" id="267613"/>
<dbReference type="Antibodypedia" id="16919">
    <property type="antibodies" value="524 antibodies from 40 providers"/>
</dbReference>
<dbReference type="DNASU" id="14275"/>
<dbReference type="Ensembl" id="ENSMUST00000106981.8">
    <property type="protein sequence ID" value="ENSMUSP00000102594.2"/>
    <property type="gene ID" value="ENSMUSG00000001827.13"/>
</dbReference>
<dbReference type="Ensembl" id="ENSMUST00000106982.8">
    <property type="protein sequence ID" value="ENSMUSP00000102595.2"/>
    <property type="gene ID" value="ENSMUSG00000001827.13"/>
</dbReference>
<dbReference type="Ensembl" id="ENSMUST00000106983.8">
    <property type="protein sequence ID" value="ENSMUSP00000102596.2"/>
    <property type="gene ID" value="ENSMUSG00000001827.13"/>
</dbReference>
<dbReference type="Ensembl" id="ENSMUST00000106985.8">
    <property type="protein sequence ID" value="ENSMUSP00000102598.2"/>
    <property type="gene ID" value="ENSMUSG00000001827.13"/>
</dbReference>
<dbReference type="Ensembl" id="ENSMUST00000106986.9">
    <property type="protein sequence ID" value="ENSMUSP00000102599.3"/>
    <property type="gene ID" value="ENSMUSG00000001827.13"/>
</dbReference>
<dbReference type="GeneID" id="14275"/>
<dbReference type="KEGG" id="mmu:14275"/>
<dbReference type="UCSC" id="uc009ipm.1">
    <property type="organism name" value="mouse"/>
</dbReference>
<dbReference type="AGR" id="MGI:95568"/>
<dbReference type="CTD" id="2348"/>
<dbReference type="MGI" id="MGI:95568">
    <property type="gene designation" value="Folr1"/>
</dbReference>
<dbReference type="VEuPathDB" id="HostDB:ENSMUSG00000001827"/>
<dbReference type="eggNOG" id="KOG3656">
    <property type="taxonomic scope" value="Eukaryota"/>
</dbReference>
<dbReference type="GeneTree" id="ENSGT00950000183144"/>
<dbReference type="HOGENOM" id="CLU_070826_1_1_1"/>
<dbReference type="InParanoid" id="P35846"/>
<dbReference type="OMA" id="YNRCPAG"/>
<dbReference type="OrthoDB" id="567542at2759"/>
<dbReference type="PhylomeDB" id="P35846"/>
<dbReference type="TreeFam" id="TF328532"/>
<dbReference type="Reactome" id="R-MMU-204005">
    <property type="pathway name" value="COPII-mediated vesicle transport"/>
</dbReference>
<dbReference type="Reactome" id="R-MMU-5694530">
    <property type="pathway name" value="Cargo concentration in the ER"/>
</dbReference>
<dbReference type="Reactome" id="R-MMU-6807878">
    <property type="pathway name" value="COPI-mediated anterograde transport"/>
</dbReference>
<dbReference type="BioGRID-ORCS" id="14275">
    <property type="hits" value="3 hits in 79 CRISPR screens"/>
</dbReference>
<dbReference type="ChiTaRS" id="Folr1">
    <property type="organism name" value="mouse"/>
</dbReference>
<dbReference type="PRO" id="PR:P35846"/>
<dbReference type="Proteomes" id="UP000000589">
    <property type="component" value="Chromosome 7"/>
</dbReference>
<dbReference type="RNAct" id="P35846">
    <property type="molecule type" value="protein"/>
</dbReference>
<dbReference type="Bgee" id="ENSMUSG00000001827">
    <property type="expression patterns" value="Expressed in choroid plexus of fourth ventricle and 153 other cell types or tissues"/>
</dbReference>
<dbReference type="ExpressionAtlas" id="P35846">
    <property type="expression patterns" value="baseline and differential"/>
</dbReference>
<dbReference type="GO" id="GO:0016324">
    <property type="term" value="C:apical plasma membrane"/>
    <property type="evidence" value="ECO:0007669"/>
    <property type="project" value="UniProtKB-SubCell"/>
</dbReference>
<dbReference type="GO" id="GO:0016323">
    <property type="term" value="C:basolateral plasma membrane"/>
    <property type="evidence" value="ECO:0007669"/>
    <property type="project" value="UniProtKB-SubCell"/>
</dbReference>
<dbReference type="GO" id="GO:0031526">
    <property type="term" value="C:brush border membrane"/>
    <property type="evidence" value="ECO:0007669"/>
    <property type="project" value="Ensembl"/>
</dbReference>
<dbReference type="GO" id="GO:0030136">
    <property type="term" value="C:clathrin-coated vesicle"/>
    <property type="evidence" value="ECO:0007669"/>
    <property type="project" value="UniProtKB-SubCell"/>
</dbReference>
<dbReference type="GO" id="GO:0005768">
    <property type="term" value="C:endosome"/>
    <property type="evidence" value="ECO:0007669"/>
    <property type="project" value="UniProtKB-SubCell"/>
</dbReference>
<dbReference type="GO" id="GO:0009897">
    <property type="term" value="C:external side of plasma membrane"/>
    <property type="evidence" value="ECO:0000250"/>
    <property type="project" value="UniProtKB"/>
</dbReference>
<dbReference type="GO" id="GO:0005576">
    <property type="term" value="C:extracellular region"/>
    <property type="evidence" value="ECO:0007669"/>
    <property type="project" value="UniProtKB-SubCell"/>
</dbReference>
<dbReference type="GO" id="GO:0016020">
    <property type="term" value="C:membrane"/>
    <property type="evidence" value="ECO:0000304"/>
    <property type="project" value="MGI"/>
</dbReference>
<dbReference type="GO" id="GO:0005634">
    <property type="term" value="C:nucleus"/>
    <property type="evidence" value="ECO:0007669"/>
    <property type="project" value="Ensembl"/>
</dbReference>
<dbReference type="GO" id="GO:0005886">
    <property type="term" value="C:plasma membrane"/>
    <property type="evidence" value="ECO:0000314"/>
    <property type="project" value="MGI"/>
</dbReference>
<dbReference type="GO" id="GO:0005542">
    <property type="term" value="F:folic acid binding"/>
    <property type="evidence" value="ECO:0000250"/>
    <property type="project" value="UniProtKB"/>
</dbReference>
<dbReference type="GO" id="GO:0061714">
    <property type="term" value="F:folic acid receptor activity"/>
    <property type="evidence" value="ECO:0000314"/>
    <property type="project" value="MGI"/>
</dbReference>
<dbReference type="GO" id="GO:0038023">
    <property type="term" value="F:signaling receptor activity"/>
    <property type="evidence" value="ECO:0000304"/>
    <property type="project" value="MGI"/>
</dbReference>
<dbReference type="GO" id="GO:0061713">
    <property type="term" value="P:anterior neural tube closure"/>
    <property type="evidence" value="ECO:0000315"/>
    <property type="project" value="BHF-UCL"/>
</dbReference>
<dbReference type="GO" id="GO:0031103">
    <property type="term" value="P:axon regeneration"/>
    <property type="evidence" value="ECO:0000315"/>
    <property type="project" value="BHF-UCL"/>
</dbReference>
<dbReference type="GO" id="GO:0003253">
    <property type="term" value="P:cardiac neural crest cell migration involved in outflow tract morphogenesis"/>
    <property type="evidence" value="ECO:0000315"/>
    <property type="project" value="BHF-UCL"/>
</dbReference>
<dbReference type="GO" id="GO:0046655">
    <property type="term" value="P:folic acid metabolic process"/>
    <property type="evidence" value="ECO:0000315"/>
    <property type="project" value="MGI"/>
</dbReference>
<dbReference type="GO" id="GO:0015884">
    <property type="term" value="P:folic acid transport"/>
    <property type="evidence" value="ECO:0000250"/>
    <property type="project" value="UniProtKB"/>
</dbReference>
<dbReference type="GO" id="GO:0001947">
    <property type="term" value="P:heart looping"/>
    <property type="evidence" value="ECO:0000315"/>
    <property type="project" value="BHF-UCL"/>
</dbReference>
<dbReference type="GO" id="GO:0003147">
    <property type="term" value="P:neural crest cell migration involved in heart formation"/>
    <property type="evidence" value="ECO:0000315"/>
    <property type="project" value="BHF-UCL"/>
</dbReference>
<dbReference type="GO" id="GO:0061626">
    <property type="term" value="P:pharyngeal arch artery morphogenesis"/>
    <property type="evidence" value="ECO:0000315"/>
    <property type="project" value="BHF-UCL"/>
</dbReference>
<dbReference type="GO" id="GO:0006620">
    <property type="term" value="P:post-translational protein targeting to endoplasmic reticulum membrane"/>
    <property type="evidence" value="ECO:0000304"/>
    <property type="project" value="MGI"/>
</dbReference>
<dbReference type="GO" id="GO:0060828">
    <property type="term" value="P:regulation of canonical Wnt signaling pathway"/>
    <property type="evidence" value="ECO:0000315"/>
    <property type="project" value="BHF-UCL"/>
</dbReference>
<dbReference type="GO" id="GO:0017015">
    <property type="term" value="P:regulation of transforming growth factor beta receptor signaling pathway"/>
    <property type="evidence" value="ECO:0000315"/>
    <property type="project" value="BHF-UCL"/>
</dbReference>
<dbReference type="GO" id="GO:0048678">
    <property type="term" value="P:response to axon injury"/>
    <property type="evidence" value="ECO:0000315"/>
    <property type="project" value="BHF-UCL"/>
</dbReference>
<dbReference type="GO" id="GO:0046654">
    <property type="term" value="P:tetrahydrofolate biosynthetic process"/>
    <property type="evidence" value="ECO:0000315"/>
    <property type="project" value="MGI"/>
</dbReference>
<dbReference type="InterPro" id="IPR004269">
    <property type="entry name" value="Folate_rcpt"/>
</dbReference>
<dbReference type="InterPro" id="IPR018143">
    <property type="entry name" value="Folate_rcpt-like"/>
</dbReference>
<dbReference type="PANTHER" id="PTHR10517">
    <property type="entry name" value="FOLATE RECEPTOR"/>
    <property type="match status" value="1"/>
</dbReference>
<dbReference type="PANTHER" id="PTHR10517:SF15">
    <property type="entry name" value="FOLATE RECEPTOR ALPHA"/>
    <property type="match status" value="1"/>
</dbReference>
<dbReference type="Pfam" id="PF03024">
    <property type="entry name" value="Folate_rec"/>
    <property type="match status" value="1"/>
</dbReference>
<reference key="1">
    <citation type="journal article" date="1991" name="J. Biol. Chem.">
        <title>Characterization of two cDNAs encoding folate-binding proteins from L1210 murine leukemia cells. Increased expression associated with a genomic rearrangement.</title>
        <authorList>
            <person name="Brigle K.E."/>
            <person name="Westin E.H."/>
            <person name="Houghton M.T."/>
            <person name="Goldman I.D."/>
        </authorList>
    </citation>
    <scope>NUCLEOTIDE SEQUENCE [MRNA]</scope>
    <scope>FUNCTION</scope>
    <scope>SUBCELLULAR LOCATION</scope>
</reference>
<reference key="2">
    <citation type="journal article" date="1999" name="Gene">
        <title>Retinoic acid-dependent upregulation of mouse folate receptor-alpha expression in embryonic stem cells, and conservation of alternative splicing patterns.</title>
        <authorList>
            <person name="Bolton J.A."/>
            <person name="Wood S.A."/>
            <person name="Kennedy D."/>
            <person name="Don R.H."/>
            <person name="Mattick J.S."/>
        </authorList>
    </citation>
    <scope>NUCLEOTIDE SEQUENCE [MRNA]</scope>
    <scope>INDUCTION</scope>
</reference>
<reference key="3">
    <citation type="journal article" date="2009" name="PLoS Biol.">
        <title>Lineage-specific biology revealed by a finished genome assembly of the mouse.</title>
        <authorList>
            <person name="Church D.M."/>
            <person name="Goodstadt L."/>
            <person name="Hillier L.W."/>
            <person name="Zody M.C."/>
            <person name="Goldstein S."/>
            <person name="She X."/>
            <person name="Bult C.J."/>
            <person name="Agarwala R."/>
            <person name="Cherry J.L."/>
            <person name="DiCuccio M."/>
            <person name="Hlavina W."/>
            <person name="Kapustin Y."/>
            <person name="Meric P."/>
            <person name="Maglott D."/>
            <person name="Birtle Z."/>
            <person name="Marques A.C."/>
            <person name="Graves T."/>
            <person name="Zhou S."/>
            <person name="Teague B."/>
            <person name="Potamousis K."/>
            <person name="Churas C."/>
            <person name="Place M."/>
            <person name="Herschleb J."/>
            <person name="Runnheim R."/>
            <person name="Forrest D."/>
            <person name="Amos-Landgraf J."/>
            <person name="Schwartz D.C."/>
            <person name="Cheng Z."/>
            <person name="Lindblad-Toh K."/>
            <person name="Eichler E.E."/>
            <person name="Ponting C.P."/>
        </authorList>
    </citation>
    <scope>NUCLEOTIDE SEQUENCE [LARGE SCALE GENOMIC DNA]</scope>
    <source>
        <strain>C57BL/6J</strain>
    </source>
</reference>
<reference key="4">
    <citation type="submission" date="2005-07" db="EMBL/GenBank/DDBJ databases">
        <authorList>
            <person name="Mural R.J."/>
            <person name="Adams M.D."/>
            <person name="Myers E.W."/>
            <person name="Smith H.O."/>
            <person name="Venter J.C."/>
        </authorList>
    </citation>
    <scope>NUCLEOTIDE SEQUENCE [LARGE SCALE GENOMIC DNA]</scope>
</reference>
<reference key="5">
    <citation type="journal article" date="2004" name="Genome Res.">
        <title>The status, quality, and expansion of the NIH full-length cDNA project: the Mammalian Gene Collection (MGC).</title>
        <authorList>
            <consortium name="The MGC Project Team"/>
        </authorList>
    </citation>
    <scope>NUCLEOTIDE SEQUENCE [LARGE SCALE MRNA]</scope>
    <source>
        <tissue>Lung</tissue>
    </source>
</reference>
<reference key="6">
    <citation type="journal article" date="1992" name="J. Biol. Chem.">
        <title>Insertion of an intracisternal A particle within the 5'-regulatory region of a gene encoding folate-binding protein in L1210 leukemia cells in response to low folate selection. Association with increased protein expression.</title>
        <authorList>
            <person name="Brigle K.E."/>
            <person name="Westin E.H."/>
            <person name="Houghton M.T."/>
            <person name="Goldman I.D."/>
        </authorList>
    </citation>
    <scope>NUCLEOTIDE SEQUENCE [GENOMIC DNA] OF 1-54</scope>
</reference>
<reference key="7">
    <citation type="journal article" date="1999" name="Nat. Genet.">
        <title>Mice lacking the folic acid-binding protein Folbp1 are defective in early embryonic development.</title>
        <authorList>
            <person name="Piedrahita J.A."/>
            <person name="Oetama B."/>
            <person name="Bennett G.D."/>
            <person name="van Waes J."/>
            <person name="Kamen B.A."/>
            <person name="Richardson J."/>
            <person name="Lacey S.W."/>
            <person name="Anderson R.G."/>
            <person name="Finnell R.H."/>
        </authorList>
    </citation>
    <scope>DISRUPTION PHENOTYPE</scope>
    <scope>FUNCTION</scope>
</reference>
<reference key="8">
    <citation type="journal article" date="2003" name="Birth Defects Res. A Clin. Mol. Teratol.">
        <title>Neural and orofacial defects in Folp1 knockout mice.</title>
        <authorList>
            <person name="Tang L.S."/>
            <person name="Finnell R.H."/>
        </authorList>
    </citation>
    <scope>DISRUPTION PHENOTYPE</scope>
    <scope>FUNCTION</scope>
</reference>
<reference key="9">
    <citation type="journal article" date="2004" name="Birth Defects Res. A Clin. Mol. Teratol.">
        <title>Developmental consequences of abnormal folate transport during murine heart morphogenesis.</title>
        <authorList>
            <person name="Tang L.S."/>
            <person name="Wlodarczyk B.J."/>
            <person name="Santillano D.R."/>
            <person name="Miranda R.C."/>
            <person name="Finnell R.H."/>
        </authorList>
    </citation>
    <scope>DISRUPTION PHENOTYPE</scope>
    <scope>FUNCTION</scope>
</reference>
<reference key="10">
    <citation type="journal article" date="2005" name="J. Am. Soc. Nephrol.">
        <title>Renal tubular reabsorption of folate mediated by folate binding protein 1.</title>
        <authorList>
            <person name="Birn H."/>
            <person name="Spiegelstein O."/>
            <person name="Christensen E.I."/>
            <person name="Finnell R.H."/>
        </authorList>
    </citation>
    <scope>DISRUPTION PHENOTYPE</scope>
    <scope>FUNCTION</scope>
    <scope>SUBCELLULAR LOCATION</scope>
    <scope>TISSUE SPECIFICITY</scope>
</reference>
<reference key="11">
    <citation type="journal article" date="2007" name="Birth Defects Res. A Clin. Mol. Teratol.">
        <title>Cardiovascular abnormalities in Folr1 knockout mice and folate rescue.</title>
        <authorList>
            <person name="Zhu H."/>
            <person name="Wlodarczyk B.J."/>
            <person name="Scott M."/>
            <person name="Yu W."/>
            <person name="Merriweather M."/>
            <person name="Gelineau-van Waes J."/>
            <person name="Schwartz R.J."/>
            <person name="Finnell R.H."/>
        </authorList>
    </citation>
    <scope>DISRUPTION PHENOTYPE</scope>
    <scope>FUNCTION</scope>
</reference>
<reference key="12">
    <citation type="journal article" date="2010" name="Cell">
        <title>A tissue-specific atlas of mouse protein phosphorylation and expression.</title>
        <authorList>
            <person name="Huttlin E.L."/>
            <person name="Jedrychowski M.P."/>
            <person name="Elias J.E."/>
            <person name="Goswami T."/>
            <person name="Rad R."/>
            <person name="Beausoleil S.A."/>
            <person name="Villen J."/>
            <person name="Haas W."/>
            <person name="Sowa M.E."/>
            <person name="Gygi S.P."/>
        </authorList>
    </citation>
    <scope>IDENTIFICATION BY MASS SPECTROMETRY [LARGE SCALE ANALYSIS]</scope>
    <source>
        <tissue>Kidney</tissue>
    </source>
</reference>
<feature type="signal peptide" evidence="2">
    <location>
        <begin position="1"/>
        <end position="24"/>
    </location>
</feature>
<feature type="chain" id="PRO_0000008804" description="Folate receptor alpha">
    <location>
        <begin position="25"/>
        <end position="232"/>
    </location>
</feature>
<feature type="propeptide" id="PRO_0000008805" description="Removed in mature form" evidence="1">
    <location>
        <begin position="233"/>
        <end position="255"/>
    </location>
</feature>
<feature type="binding site" evidence="1">
    <location>
        <position position="101"/>
    </location>
    <ligand>
        <name>folate</name>
        <dbReference type="ChEBI" id="CHEBI:62501"/>
    </ligand>
</feature>
<feature type="binding site" evidence="1">
    <location>
        <position position="105"/>
    </location>
    <ligand>
        <name>folate</name>
        <dbReference type="ChEBI" id="CHEBI:62501"/>
    </ligand>
</feature>
<feature type="binding site" evidence="1">
    <location>
        <begin position="122"/>
        <end position="126"/>
    </location>
    <ligand>
        <name>folate</name>
        <dbReference type="ChEBI" id="CHEBI:62501"/>
    </ligand>
</feature>
<feature type="binding site" evidence="1">
    <location>
        <begin position="155"/>
        <end position="160"/>
    </location>
    <ligand>
        <name>folate</name>
        <dbReference type="ChEBI" id="CHEBI:62501"/>
    </ligand>
</feature>
<feature type="binding site" evidence="1">
    <location>
        <position position="194"/>
    </location>
    <ligand>
        <name>folate</name>
        <dbReference type="ChEBI" id="CHEBI:62501"/>
    </ligand>
</feature>
<feature type="lipid moiety-binding region" description="GPI-anchor amidated serine" evidence="1">
    <location>
        <position position="232"/>
    </location>
</feature>
<feature type="glycosylation site" description="N-linked (GlcNAc...) asparagine" evidence="2">
    <location>
        <position position="67"/>
    </location>
</feature>
<feature type="glycosylation site" description="N-linked (GlcNAc...) asparagine" evidence="2">
    <location>
        <position position="159"/>
    </location>
</feature>
<feature type="glycosylation site" description="N-linked (GlcNAc...) asparagine" evidence="2">
    <location>
        <position position="199"/>
    </location>
</feature>
<feature type="disulfide bond" evidence="1">
    <location>
        <begin position="35"/>
        <end position="63"/>
    </location>
</feature>
<feature type="disulfide bond" evidence="1">
    <location>
        <begin position="55"/>
        <end position="103"/>
    </location>
</feature>
<feature type="disulfide bond" evidence="1">
    <location>
        <begin position="64"/>
        <end position="107"/>
    </location>
</feature>
<feature type="disulfide bond" evidence="1">
    <location>
        <begin position="87"/>
        <end position="173"/>
    </location>
</feature>
<feature type="disulfide bond" evidence="1">
    <location>
        <begin position="94"/>
        <end position="144"/>
    </location>
</feature>
<feature type="disulfide bond" evidence="1">
    <location>
        <begin position="133"/>
        <end position="207"/>
    </location>
</feature>
<feature type="disulfide bond" evidence="1">
    <location>
        <begin position="137"/>
        <end position="187"/>
    </location>
</feature>
<feature type="disulfide bond" evidence="1">
    <location>
        <begin position="150"/>
        <end position="167"/>
    </location>
</feature>
<feature type="sequence conflict" description="In Ref. 1; AAA37595." evidence="9" ref="1">
    <original>F</original>
    <variation>L</variation>
    <location>
        <position position="236"/>
    </location>
</feature>
<accession>P35846</accession>
<accession>Q9R222</accession>